<organism>
    <name type="scientific">Bartonella quintana (strain Toulouse)</name>
    <name type="common">Rochalimaea quintana</name>
    <dbReference type="NCBI Taxonomy" id="283165"/>
    <lineage>
        <taxon>Bacteria</taxon>
        <taxon>Pseudomonadati</taxon>
        <taxon>Pseudomonadota</taxon>
        <taxon>Alphaproteobacteria</taxon>
        <taxon>Hyphomicrobiales</taxon>
        <taxon>Bartonellaceae</taxon>
        <taxon>Bartonella</taxon>
    </lineage>
</organism>
<comment type="function">
    <text evidence="1">Involved in the regulation of glutamine synthetase GlnA, a key enzyme in the process to assimilate ammonia. When cellular nitrogen levels are high, the C-terminal adenylyl transferase (AT) inactivates GlnA by covalent transfer of an adenylyl group from ATP to specific tyrosine residue of GlnA, thus reducing its activity. Conversely, when nitrogen levels are low, the N-terminal adenylyl removase (AR) activates GlnA by removing the adenylyl group by phosphorolysis, increasing its activity. The regulatory region of GlnE binds the signal transduction protein PII (GlnB) which indicates the nitrogen status of the cell.</text>
</comment>
<comment type="catalytic activity">
    <reaction evidence="1">
        <text>[glutamine synthetase]-O(4)-(5'-adenylyl)-L-tyrosine + phosphate = [glutamine synthetase]-L-tyrosine + ADP</text>
        <dbReference type="Rhea" id="RHEA:43716"/>
        <dbReference type="Rhea" id="RHEA-COMP:10660"/>
        <dbReference type="Rhea" id="RHEA-COMP:10661"/>
        <dbReference type="ChEBI" id="CHEBI:43474"/>
        <dbReference type="ChEBI" id="CHEBI:46858"/>
        <dbReference type="ChEBI" id="CHEBI:83624"/>
        <dbReference type="ChEBI" id="CHEBI:456216"/>
        <dbReference type="EC" id="2.7.7.89"/>
    </reaction>
</comment>
<comment type="catalytic activity">
    <reaction evidence="1">
        <text>[glutamine synthetase]-L-tyrosine + ATP = [glutamine synthetase]-O(4)-(5'-adenylyl)-L-tyrosine + diphosphate</text>
        <dbReference type="Rhea" id="RHEA:18589"/>
        <dbReference type="Rhea" id="RHEA-COMP:10660"/>
        <dbReference type="Rhea" id="RHEA-COMP:10661"/>
        <dbReference type="ChEBI" id="CHEBI:30616"/>
        <dbReference type="ChEBI" id="CHEBI:33019"/>
        <dbReference type="ChEBI" id="CHEBI:46858"/>
        <dbReference type="ChEBI" id="CHEBI:83624"/>
        <dbReference type="EC" id="2.7.7.42"/>
    </reaction>
</comment>
<comment type="cofactor">
    <cofactor evidence="1">
        <name>Mg(2+)</name>
        <dbReference type="ChEBI" id="CHEBI:18420"/>
    </cofactor>
</comment>
<comment type="similarity">
    <text evidence="1">Belongs to the GlnE family.</text>
</comment>
<dbReference type="EC" id="2.7.7.89" evidence="1"/>
<dbReference type="EC" id="2.7.7.42" evidence="1"/>
<dbReference type="EMBL" id="BX897700">
    <property type="protein sequence ID" value="CAF25899.1"/>
    <property type="molecule type" value="Genomic_DNA"/>
</dbReference>
<dbReference type="RefSeq" id="WP_011179188.1">
    <property type="nucleotide sequence ID" value="NC_005955.1"/>
</dbReference>
<dbReference type="SMR" id="Q6G0B0"/>
<dbReference type="KEGG" id="bqu:BQ04000"/>
<dbReference type="eggNOG" id="COG1391">
    <property type="taxonomic scope" value="Bacteria"/>
</dbReference>
<dbReference type="HOGENOM" id="CLU_006233_0_0_5"/>
<dbReference type="OrthoDB" id="9759366at2"/>
<dbReference type="Proteomes" id="UP000000597">
    <property type="component" value="Chromosome"/>
</dbReference>
<dbReference type="GO" id="GO:0005829">
    <property type="term" value="C:cytosol"/>
    <property type="evidence" value="ECO:0007669"/>
    <property type="project" value="TreeGrafter"/>
</dbReference>
<dbReference type="GO" id="GO:0008882">
    <property type="term" value="F:[glutamate-ammonia-ligase] adenylyltransferase activity"/>
    <property type="evidence" value="ECO:0007669"/>
    <property type="project" value="UniProtKB-UniRule"/>
</dbReference>
<dbReference type="GO" id="GO:0047388">
    <property type="term" value="F:[glutamine synthetase]-adenylyl-L-tyrosine phosphorylase activity"/>
    <property type="evidence" value="ECO:0007669"/>
    <property type="project" value="UniProtKB-EC"/>
</dbReference>
<dbReference type="GO" id="GO:0005524">
    <property type="term" value="F:ATP binding"/>
    <property type="evidence" value="ECO:0007669"/>
    <property type="project" value="UniProtKB-UniRule"/>
</dbReference>
<dbReference type="GO" id="GO:0000287">
    <property type="term" value="F:magnesium ion binding"/>
    <property type="evidence" value="ECO:0007669"/>
    <property type="project" value="UniProtKB-UniRule"/>
</dbReference>
<dbReference type="GO" id="GO:0000820">
    <property type="term" value="P:regulation of glutamine family amino acid metabolic process"/>
    <property type="evidence" value="ECO:0007669"/>
    <property type="project" value="UniProtKB-UniRule"/>
</dbReference>
<dbReference type="CDD" id="cd05401">
    <property type="entry name" value="NT_GlnE_GlnD_like"/>
    <property type="match status" value="2"/>
</dbReference>
<dbReference type="Gene3D" id="1.20.120.1510">
    <property type="match status" value="1"/>
</dbReference>
<dbReference type="Gene3D" id="3.30.460.10">
    <property type="entry name" value="Beta Polymerase, domain 2"/>
    <property type="match status" value="2"/>
</dbReference>
<dbReference type="Gene3D" id="1.20.120.330">
    <property type="entry name" value="Nucleotidyltransferases domain 2"/>
    <property type="match status" value="2"/>
</dbReference>
<dbReference type="HAMAP" id="MF_00802">
    <property type="entry name" value="GlnE"/>
    <property type="match status" value="1"/>
</dbReference>
<dbReference type="InterPro" id="IPR023057">
    <property type="entry name" value="GlnE"/>
</dbReference>
<dbReference type="InterPro" id="IPR005190">
    <property type="entry name" value="GlnE_rpt_dom"/>
</dbReference>
<dbReference type="InterPro" id="IPR043519">
    <property type="entry name" value="NT_sf"/>
</dbReference>
<dbReference type="InterPro" id="IPR013546">
    <property type="entry name" value="PII_UdlTrfase/GS_AdlTrfase"/>
</dbReference>
<dbReference type="NCBIfam" id="NF008292">
    <property type="entry name" value="PRK11072.1"/>
    <property type="match status" value="1"/>
</dbReference>
<dbReference type="NCBIfam" id="NF010706">
    <property type="entry name" value="PRK14108.1"/>
    <property type="match status" value="1"/>
</dbReference>
<dbReference type="PANTHER" id="PTHR30621:SF0">
    <property type="entry name" value="BIFUNCTIONAL GLUTAMINE SYNTHETASE ADENYLYLTRANSFERASE_ADENYLYL-REMOVING ENZYME"/>
    <property type="match status" value="1"/>
</dbReference>
<dbReference type="PANTHER" id="PTHR30621">
    <property type="entry name" value="GLUTAMINE SYNTHETASE ADENYLYLTRANSFERASE"/>
    <property type="match status" value="1"/>
</dbReference>
<dbReference type="Pfam" id="PF08335">
    <property type="entry name" value="GlnD_UR_UTase"/>
    <property type="match status" value="1"/>
</dbReference>
<dbReference type="Pfam" id="PF03710">
    <property type="entry name" value="GlnE"/>
    <property type="match status" value="2"/>
</dbReference>
<dbReference type="SUPFAM" id="SSF81301">
    <property type="entry name" value="Nucleotidyltransferase"/>
    <property type="match status" value="2"/>
</dbReference>
<dbReference type="SUPFAM" id="SSF81593">
    <property type="entry name" value="Nucleotidyltransferase substrate binding subunit/domain"/>
    <property type="match status" value="2"/>
</dbReference>
<name>GLNE_BARQU</name>
<feature type="chain" id="PRO_0000209229" description="Bifunctional glutamine synthetase adenylyltransferase/adenylyl-removing enzyme">
    <location>
        <begin position="1"/>
        <end position="974"/>
    </location>
</feature>
<feature type="region of interest" description="Adenylyl removase" evidence="1">
    <location>
        <begin position="1"/>
        <end position="464"/>
    </location>
</feature>
<feature type="region of interest" description="Adenylyl transferase" evidence="1">
    <location>
        <begin position="468"/>
        <end position="974"/>
    </location>
</feature>
<keyword id="KW-0067">ATP-binding</keyword>
<keyword id="KW-0460">Magnesium</keyword>
<keyword id="KW-0511">Multifunctional enzyme</keyword>
<keyword id="KW-0547">Nucleotide-binding</keyword>
<keyword id="KW-0548">Nucleotidyltransferase</keyword>
<keyword id="KW-0808">Transferase</keyword>
<proteinExistence type="inferred from homology"/>
<accession>Q6G0B0</accession>
<evidence type="ECO:0000255" key="1">
    <source>
        <dbReference type="HAMAP-Rule" id="MF_00802"/>
    </source>
</evidence>
<protein>
    <recommendedName>
        <fullName evidence="1">Bifunctional glutamine synthetase adenylyltransferase/adenylyl-removing enzyme</fullName>
    </recommendedName>
    <alternativeName>
        <fullName evidence="1">ATP:glutamine synthetase adenylyltransferase</fullName>
    </alternativeName>
    <alternativeName>
        <fullName evidence="1">ATase</fullName>
    </alternativeName>
    <domain>
        <recommendedName>
            <fullName evidence="1">Glutamine synthetase adenylyl-L-tyrosine phosphorylase</fullName>
            <ecNumber evidence="1">2.7.7.89</ecNumber>
        </recommendedName>
        <alternativeName>
            <fullName evidence="1">Adenylyl removase</fullName>
            <shortName evidence="1">AR</shortName>
            <shortName evidence="1">AT-N</shortName>
        </alternativeName>
    </domain>
    <domain>
        <recommendedName>
            <fullName evidence="1">Glutamine synthetase adenylyl transferase</fullName>
            <ecNumber evidence="1">2.7.7.42</ecNumber>
        </recommendedName>
        <alternativeName>
            <fullName evidence="1">Adenylyl transferase</fullName>
            <shortName evidence="1">AT</shortName>
            <shortName evidence="1">AT-C</shortName>
        </alternativeName>
    </domain>
</protein>
<reference key="1">
    <citation type="journal article" date="2004" name="Proc. Natl. Acad. Sci. U.S.A.">
        <title>The louse-borne human pathogen Bartonella quintana is a genomic derivative of the zoonotic agent Bartonella henselae.</title>
        <authorList>
            <person name="Alsmark U.C.M."/>
            <person name="Frank A.C."/>
            <person name="Karlberg E.O."/>
            <person name="Legault B.-A."/>
            <person name="Ardell D.H."/>
            <person name="Canbaeck B."/>
            <person name="Eriksson A.-S."/>
            <person name="Naeslund A.K."/>
            <person name="Handley S.A."/>
            <person name="Huvet M."/>
            <person name="La Scola B."/>
            <person name="Holmberg M."/>
            <person name="Andersson S.G.E."/>
        </authorList>
    </citation>
    <scope>NUCLEOTIDE SEQUENCE [LARGE SCALE GENOMIC DNA]</scope>
    <source>
        <strain>Toulouse</strain>
    </source>
</reference>
<gene>
    <name evidence="1" type="primary">glnE</name>
    <name type="ordered locus">BQ04000</name>
</gene>
<sequence>MKNAFLKTHLFPLCPLDESGSQWLKDIEEQARKENLESLVSYFSAKGKQVDFISAVMTLSPFLREVLIANPSYLSPLLYVDIETRLSEIIDDVALIDKSESINETALMAALRRKKREAHILIALADLSGVFTYEISCTWLTRLGEAALGVALRFLLREAHDHGKISLSSRDNPEKDSGLIILGLGKLGAGELNYSSDIDLIVFIDEMSPHIGDLSESVDVFSKMVRRLIRIIQERTAEGYVFRLDFRLRPDPGSTPLALPVRTALRYYEGRGQNWERAAMIKARPVAGDKRAGFKFLKELFPYVWRKYLDYAAIADIHSIKRQIHACKNYGQITAYGHNIKLGRGGIREIEFFVQTQQLIAGGRFPQLRGRQTVAMLTELHTLGWISEKTSDNLIKSYAFLRNVEHRIQMLADEQTHLLPNDVSQFTSVAYLMGYQESSSFIRDLLKVLQVVEKHYAALFENEQELGLEIGNLVFTGEEDDPETLITLSCLGFERASDICRIMRTLHCGRYKATQSAEARERLTELTPALLKAFGAIKRADEAMLRFDSFLQGLPSGIQLFSLLQSNPSLLDMLVLIMGAAPRLAEIITRKPHVFDGMLDPTILSELPTKTYLENRLEYFLEGVIPYEEILDHLRVFADEQRFLIGIRILNGAITGEKAGFAFTALADLMIAKTLAAVQEEFSRIHGNIKGGRVGILGMGKLGSCELTAGSDVDLILVYEHDEDAEISDGEKPLYISQYYTRFTKRLIAALSTLTSQGVLYAVDLRLRPLGNKGPVAVSFEFFRKYYRKEAWIWEYLALTRARGIAGDPNFLQNLENEVCAIIALPHDKKDVAKAVREMRTLIEKEKPPENRWDLKMMSGGIMDVEFIAQFALITHVVAFQIGASTADILAHLPNSVLNQSCIVDLHRAYSLYTNLNQMIRLCLNDAFDPHDMPPGLSDLLLSSVGEPDLLRVEKLIEETAQSVCSIFKQIMKH</sequence>